<keyword id="KW-0150">Chloroplast</keyword>
<keyword id="KW-0324">Glycolysis</keyword>
<keyword id="KW-0413">Isomerase</keyword>
<keyword id="KW-0464">Manganese</keyword>
<keyword id="KW-0479">Metal-binding</keyword>
<keyword id="KW-0934">Plastid</keyword>
<comment type="function">
    <text evidence="1">Catalyzes the interconversion of 2-phosphoglycerate and 3-phosphoglycerate.</text>
</comment>
<comment type="catalytic activity">
    <reaction evidence="1">
        <text>(2R)-2-phosphoglycerate = (2R)-3-phosphoglycerate</text>
        <dbReference type="Rhea" id="RHEA:15901"/>
        <dbReference type="ChEBI" id="CHEBI:58272"/>
        <dbReference type="ChEBI" id="CHEBI:58289"/>
        <dbReference type="EC" id="5.4.2.12"/>
    </reaction>
</comment>
<comment type="cofactor">
    <cofactor evidence="1">
        <name>Mn(2+)</name>
        <dbReference type="ChEBI" id="CHEBI:29035"/>
    </cofactor>
    <text evidence="1">Binds 2 manganese ions per subunit.</text>
</comment>
<comment type="pathway">
    <text evidence="1">Carbohydrate degradation; glycolysis; pyruvate from D-glyceraldehyde 3-phosphate: step 3/5.</text>
</comment>
<comment type="subcellular location">
    <subcellularLocation>
        <location>Plastid</location>
        <location>Chloroplast</location>
    </subcellularLocation>
</comment>
<comment type="similarity">
    <text evidence="1">Belongs to the BPG-independent phosphoglycerate mutase family.</text>
</comment>
<feature type="chain" id="PRO_0000212244" description="2,3-bisphosphoglycerate-independent phosphoglycerate mutase">
    <location>
        <begin position="1"/>
        <end position="510"/>
    </location>
</feature>
<feature type="active site" description="Phosphoserine intermediate" evidence="1">
    <location>
        <position position="65"/>
    </location>
</feature>
<feature type="binding site" evidence="1">
    <location>
        <position position="15"/>
    </location>
    <ligand>
        <name>Mn(2+)</name>
        <dbReference type="ChEBI" id="CHEBI:29035"/>
        <label>2</label>
    </ligand>
</feature>
<feature type="binding site" evidence="1">
    <location>
        <position position="65"/>
    </location>
    <ligand>
        <name>Mn(2+)</name>
        <dbReference type="ChEBI" id="CHEBI:29035"/>
        <label>2</label>
    </ligand>
</feature>
<feature type="binding site" evidence="1">
    <location>
        <position position="126"/>
    </location>
    <ligand>
        <name>substrate</name>
    </ligand>
</feature>
<feature type="binding site" evidence="1">
    <location>
        <begin position="155"/>
        <end position="156"/>
    </location>
    <ligand>
        <name>substrate</name>
    </ligand>
</feature>
<feature type="binding site" evidence="1">
    <location>
        <position position="187"/>
    </location>
    <ligand>
        <name>substrate</name>
    </ligand>
</feature>
<feature type="binding site" evidence="1">
    <location>
        <position position="193"/>
    </location>
    <ligand>
        <name>substrate</name>
    </ligand>
</feature>
<feature type="binding site" evidence="1">
    <location>
        <begin position="259"/>
        <end position="262"/>
    </location>
    <ligand>
        <name>substrate</name>
    </ligand>
</feature>
<feature type="binding site" evidence="1">
    <location>
        <position position="332"/>
    </location>
    <ligand>
        <name>substrate</name>
    </ligand>
</feature>
<feature type="binding site" evidence="1">
    <location>
        <position position="399"/>
    </location>
    <ligand>
        <name>Mn(2+)</name>
        <dbReference type="ChEBI" id="CHEBI:29035"/>
        <label>1</label>
    </ligand>
</feature>
<feature type="binding site" evidence="1">
    <location>
        <position position="403"/>
    </location>
    <ligand>
        <name>Mn(2+)</name>
        <dbReference type="ChEBI" id="CHEBI:29035"/>
        <label>1</label>
    </ligand>
</feature>
<feature type="binding site" evidence="1">
    <location>
        <position position="440"/>
    </location>
    <ligand>
        <name>Mn(2+)</name>
        <dbReference type="ChEBI" id="CHEBI:29035"/>
        <label>2</label>
    </ligand>
</feature>
<feature type="binding site" evidence="1">
    <location>
        <position position="441"/>
    </location>
    <ligand>
        <name>Mn(2+)</name>
        <dbReference type="ChEBI" id="CHEBI:29035"/>
        <label>2</label>
    </ligand>
</feature>
<feature type="binding site" evidence="1">
    <location>
        <position position="458"/>
    </location>
    <ligand>
        <name>Mn(2+)</name>
        <dbReference type="ChEBI" id="CHEBI:29035"/>
        <label>1</label>
    </ligand>
</feature>
<name>GPMI_ANTSP</name>
<organism>
    <name type="scientific">Antithamnion sp.</name>
    <name type="common">Red alga</name>
    <dbReference type="NCBI Taxonomy" id="2767"/>
    <lineage>
        <taxon>Eukaryota</taxon>
        <taxon>Rhodophyta</taxon>
        <taxon>Florideophyceae</taxon>
        <taxon>Rhodymeniophycidae</taxon>
        <taxon>Ceramiales</taxon>
        <taxon>Ceramiaceae</taxon>
        <taxon>Antithamnion</taxon>
    </lineage>
</organism>
<accession>Q06464</accession>
<evidence type="ECO:0000255" key="1">
    <source>
        <dbReference type="HAMAP-Rule" id="MF_01038"/>
    </source>
</evidence>
<dbReference type="EC" id="5.4.2.12" evidence="1"/>
<dbReference type="EMBL" id="X64705">
    <property type="protein sequence ID" value="CAA45959.1"/>
    <property type="molecule type" value="Genomic_DNA"/>
</dbReference>
<dbReference type="PIR" id="S42705">
    <property type="entry name" value="S42705"/>
</dbReference>
<dbReference type="SMR" id="Q06464"/>
<dbReference type="UniPathway" id="UPA00109">
    <property type="reaction ID" value="UER00186"/>
</dbReference>
<dbReference type="GO" id="GO:0009507">
    <property type="term" value="C:chloroplast"/>
    <property type="evidence" value="ECO:0007669"/>
    <property type="project" value="UniProtKB-SubCell"/>
</dbReference>
<dbReference type="GO" id="GO:0005829">
    <property type="term" value="C:cytosol"/>
    <property type="evidence" value="ECO:0007669"/>
    <property type="project" value="TreeGrafter"/>
</dbReference>
<dbReference type="GO" id="GO:0030145">
    <property type="term" value="F:manganese ion binding"/>
    <property type="evidence" value="ECO:0007669"/>
    <property type="project" value="UniProtKB-UniRule"/>
</dbReference>
<dbReference type="GO" id="GO:0004619">
    <property type="term" value="F:phosphoglycerate mutase activity"/>
    <property type="evidence" value="ECO:0007669"/>
    <property type="project" value="UniProtKB-EC"/>
</dbReference>
<dbReference type="GO" id="GO:0006007">
    <property type="term" value="P:glucose catabolic process"/>
    <property type="evidence" value="ECO:0007669"/>
    <property type="project" value="InterPro"/>
</dbReference>
<dbReference type="GO" id="GO:0006096">
    <property type="term" value="P:glycolytic process"/>
    <property type="evidence" value="ECO:0007669"/>
    <property type="project" value="UniProtKB-UniRule"/>
</dbReference>
<dbReference type="CDD" id="cd16010">
    <property type="entry name" value="iPGM"/>
    <property type="match status" value="1"/>
</dbReference>
<dbReference type="FunFam" id="3.40.1450.10:FF:000002">
    <property type="entry name" value="2,3-bisphosphoglycerate-independent phosphoglycerate mutase"/>
    <property type="match status" value="1"/>
</dbReference>
<dbReference type="Gene3D" id="3.40.720.10">
    <property type="entry name" value="Alkaline Phosphatase, subunit A"/>
    <property type="match status" value="1"/>
</dbReference>
<dbReference type="Gene3D" id="3.40.1450.10">
    <property type="entry name" value="BPG-independent phosphoglycerate mutase, domain B"/>
    <property type="match status" value="1"/>
</dbReference>
<dbReference type="HAMAP" id="MF_01038">
    <property type="entry name" value="GpmI"/>
    <property type="match status" value="1"/>
</dbReference>
<dbReference type="InterPro" id="IPR017850">
    <property type="entry name" value="Alkaline_phosphatase_core_sf"/>
</dbReference>
<dbReference type="InterPro" id="IPR011258">
    <property type="entry name" value="BPG-indep_PGM_N"/>
</dbReference>
<dbReference type="InterPro" id="IPR006124">
    <property type="entry name" value="Metalloenzyme"/>
</dbReference>
<dbReference type="InterPro" id="IPR036646">
    <property type="entry name" value="PGAM_B_sf"/>
</dbReference>
<dbReference type="InterPro" id="IPR005995">
    <property type="entry name" value="Pgm_bpd_ind"/>
</dbReference>
<dbReference type="NCBIfam" id="TIGR01307">
    <property type="entry name" value="pgm_bpd_ind"/>
    <property type="match status" value="1"/>
</dbReference>
<dbReference type="PANTHER" id="PTHR31637">
    <property type="entry name" value="2,3-BISPHOSPHOGLYCERATE-INDEPENDENT PHOSPHOGLYCERATE MUTASE"/>
    <property type="match status" value="1"/>
</dbReference>
<dbReference type="PANTHER" id="PTHR31637:SF0">
    <property type="entry name" value="2,3-BISPHOSPHOGLYCERATE-INDEPENDENT PHOSPHOGLYCERATE MUTASE"/>
    <property type="match status" value="1"/>
</dbReference>
<dbReference type="Pfam" id="PF06415">
    <property type="entry name" value="iPGM_N"/>
    <property type="match status" value="1"/>
</dbReference>
<dbReference type="Pfam" id="PF01676">
    <property type="entry name" value="Metalloenzyme"/>
    <property type="match status" value="1"/>
</dbReference>
<dbReference type="PIRSF" id="PIRSF001492">
    <property type="entry name" value="IPGAM"/>
    <property type="match status" value="1"/>
</dbReference>
<dbReference type="SUPFAM" id="SSF64158">
    <property type="entry name" value="2,3-Bisphosphoglycerate-independent phosphoglycerate mutase, substrate-binding domain"/>
    <property type="match status" value="1"/>
</dbReference>
<dbReference type="SUPFAM" id="SSF53649">
    <property type="entry name" value="Alkaline phosphatase-like"/>
    <property type="match status" value="1"/>
</dbReference>
<geneLocation type="chloroplast"/>
<gene>
    <name evidence="1" type="primary">gpmI</name>
    <name type="synonym">pgmA</name>
</gene>
<protein>
    <recommendedName>
        <fullName evidence="1">2,3-bisphosphoglycerate-independent phosphoglycerate mutase</fullName>
        <shortName evidence="1">BPG-independent PGAM</shortName>
        <shortName evidence="1">Phosphoglyceromutase</shortName>
        <shortName evidence="1">iPGM</shortName>
        <ecNumber evidence="1">5.4.2.12</ecNumber>
    </recommendedName>
</protein>
<proteinExistence type="inferred from homology"/>
<sequence>MNNKSISPIILMILDGWGHSTNAKGNAIHEANTPIIDKLWDNYPKTLLSASGEHVGLPHKQMGNSEVGHTTIGAGRIINQDLVKISKSIKNKEFFNNYQLHNIYKYSCEKNSKVHIVGLCSNGGVHSHINHLKALIQISKQYKVMTCLHLITDGRDTLPKQAKLFVKEIIDIIDENYNTEICTISGRYYSMDRDCRWSRTEKAYKAMVENSCNQNSSSDILSIIDKYYEQNISDEFLPPTKISMHNIVHNDSLIFFNFRPDRIRQLLHSFAKPNFKGFQRKTIKNLMLTTFTEYDSTLSIPTVFPNEPKKNFLGQIISNSGLKQLRLAETEKYAHVTYFFNGGIEEPFPGENRELIASPKVETYDLPPEMSAYQLTNSLIEAINKQLYQFIVINYANPDMIGHTGNMNATIEAIEIVDQCIEKVLHTIEDTNNILIITSDHGNADYMLTDENKPCTSHSINPVPFILINNRQKKQTNLHSHGSLADIAPTILDILNINIPNEMNGKSLIT</sequence>
<reference key="1">
    <citation type="journal article" date="1993" name="Mol. Gen. Genet.">
        <title>SecA is plastid-encoded in a red alga: implications for the evolution of plastid genomes and the thylakoid protein import apparatus.</title>
        <authorList>
            <person name="Valentin K.-U."/>
        </authorList>
    </citation>
    <scope>NUCLEOTIDE SEQUENCE [GENOMIC DNA]</scope>
</reference>